<comment type="function">
    <text evidence="1">Down-regulates SLC1A2/EAAT2 promoter activity when expressed ectopically. Activates the nuclear factor kappa-B (NF-kappa-B) transcription factor. Promotes anchorage-independent growth of immortalized melanocytes and astrocytes which is a key component in tumor cell expansion. Promotes lung metastasis and also has an effect on bone and brain metastasis, possibly by enhancing the seeding of tumor cells to the target organ endothelium. Induces chemoresistance (By similarity).</text>
</comment>
<comment type="subunit">
    <text evidence="1">Interacts with BCCIP, CREBBP/CBP and RELA/p65.</text>
</comment>
<comment type="subcellular location">
    <subcellularLocation>
        <location evidence="1">Endoplasmic reticulum membrane</location>
        <topology evidence="1">Single-pass membrane protein</topology>
    </subcellularLocation>
    <subcellularLocation>
        <location evidence="1">Nucleus membrane</location>
        <topology evidence="1">Single-pass membrane protein</topology>
    </subcellularLocation>
    <subcellularLocation>
        <location evidence="1">Cell junction</location>
        <location evidence="1">Tight junction</location>
    </subcellularLocation>
    <subcellularLocation>
        <location evidence="1">Nucleus</location>
        <location evidence="1">Nucleolus</location>
    </subcellularLocation>
    <subcellularLocation>
        <location evidence="1">Cytoplasm</location>
        <location evidence="1">Perinuclear region</location>
    </subcellularLocation>
    <text evidence="1">In epithelial cells, recruited to tight junctions (TJ) during the maturation of the TJ complexes. A nucleolar staining may be due to nuclear targeting of an isoform lacking the transmembrane domain. TNF-alpha causes translocation from the cytoplasm to the nucleus (By similarity).</text>
</comment>
<comment type="alternative products">
    <event type="alternative splicing"/>
    <isoform>
        <id>Q9Z1W6-1</id>
        <name>1</name>
        <sequence type="displayed"/>
    </isoform>
    <isoform>
        <id>Q9Z1W6-2</id>
        <name>2</name>
        <sequence type="described" ref="VSP_012227"/>
    </isoform>
    <isoform>
        <id>Q9Z1W6-3</id>
        <name>3</name>
        <sequence type="described" ref="VSP_012228"/>
    </isoform>
    <isoform>
        <id>Q9Z1W6-4</id>
        <name>4</name>
        <sequence type="described" ref="VSP_012227 VSP_012228"/>
    </isoform>
</comment>
<comment type="tissue specificity">
    <text evidence="6">Widely expressed, with highest levels in liver, kidney, prostate and small intestine. Not detected in endothelial cells.</text>
</comment>
<name>LYRIC_RAT</name>
<protein>
    <recommendedName>
        <fullName>Protein LYRIC</fullName>
    </recommendedName>
    <alternativeName>
        <fullName>Lysine-rich CEACAM1 co-isolated protein</fullName>
    </alternativeName>
    <alternativeName>
        <fullName>Metadherin</fullName>
    </alternativeName>
    <alternativeName>
        <fullName>Metastasis adhesion protein</fullName>
    </alternativeName>
</protein>
<sequence>MAARSWQDELAQQAEEGSARLRELLSVGLGFLRTELGLDLGLEPKRYPSWVILVGTGALGLLLLFLLGYGWAAACAGARKKRRSPPRKREEVTPPTPAPEDPAQLKNLRSEEQKKKNRKKLPEKPKPNGRTVEIPEDEVVRTPRSITAKQPPETDKKNEKSKKNKKKSKSDAKAVQNSSRHDGKEVDEGAWETKISHREKRQQRKRDKVLTDSGSLDSTIPGIENTITVTTEQLTTASFPVGSKKNKGDSHLNVQVSNFKSGKGDSTLQVSSGLNENITVNGGGWSEKSVKLSSQLSAGEEKWNSVPPASAGKRKTEQSAWTQDPGDTNANGKDWGRNWSDRSIFSGIGSTAEPVSQSTTSDYQWDGSRNQPHIDDEWSGLNGLSSADPSSDWNAPAEEWGNWVDEDRASLLKSQEPISNDQKDSDDDKEKGEGALPTGKSKKKKKKKKKQGEDNSITQDTEDLEKDTREELPVNTSKARPKQEKACSLKTMSTSDPVEVLIKNSQPIKTLPPAISAEPSVTLSKGDSDKSSSQVPPMLQDTDKPKSNAKQNSVPPSQTKSETNWESPKQIKKKKKARRET</sequence>
<evidence type="ECO:0000250" key="1"/>
<evidence type="ECO:0000250" key="2">
    <source>
        <dbReference type="UniProtKB" id="Q80WJ7"/>
    </source>
</evidence>
<evidence type="ECO:0000250" key="3">
    <source>
        <dbReference type="UniProtKB" id="Q86UE4"/>
    </source>
</evidence>
<evidence type="ECO:0000255" key="4"/>
<evidence type="ECO:0000256" key="5">
    <source>
        <dbReference type="SAM" id="MobiDB-lite"/>
    </source>
</evidence>
<evidence type="ECO:0000269" key="6">
    <source>
    </source>
</evidence>
<evidence type="ECO:0000305" key="7"/>
<evidence type="ECO:0007744" key="8">
    <source>
    </source>
</evidence>
<reference key="1">
    <citation type="journal article" date="2004" name="Exp. Cell Res.">
        <title>Identification of a novel protein, LYRIC, localized to tight junctions of polarized epithelial cells.</title>
        <authorList>
            <person name="Britt D.E."/>
            <person name="Yang D.-F."/>
            <person name="Yang D.-Q."/>
            <person name="Flanagan D.L."/>
            <person name="Callanan H."/>
            <person name="Lim Y.-P."/>
            <person name="Lin S.-H."/>
            <person name="Hixson D.C."/>
        </authorList>
    </citation>
    <scope>NUCLEOTIDE SEQUENCE [MRNA] (ISOFORM 1)</scope>
    <scope>ALTERNATIVE SPLICING</scope>
    <scope>TISSUE SPECIFICITY</scope>
    <scope>SUBCELLULAR LOCATION</scope>
    <source>
        <strain>Fischer</strain>
        <tissue>Bile duct</tissue>
    </source>
</reference>
<reference key="2">
    <citation type="journal article" date="2012" name="Nat. Commun.">
        <title>Quantitative maps of protein phosphorylation sites across 14 different rat organs and tissues.</title>
        <authorList>
            <person name="Lundby A."/>
            <person name="Secher A."/>
            <person name="Lage K."/>
            <person name="Nordsborg N.B."/>
            <person name="Dmytriyev A."/>
            <person name="Lundby C."/>
            <person name="Olsen J.V."/>
        </authorList>
    </citation>
    <scope>PHOSPHORYLATION [LARGE SCALE ANALYSIS] AT SER-297; SER-425; SER-456 AND SER-567</scope>
    <scope>IDENTIFICATION BY MASS SPECTROMETRY [LARGE SCALE ANALYSIS]</scope>
</reference>
<accession>Q9Z1W6</accession>
<feature type="chain" id="PRO_0000084535" description="Protein LYRIC">
    <location>
        <begin position="1"/>
        <end position="581"/>
    </location>
</feature>
<feature type="topological domain" description="Lumenal" evidence="4">
    <location>
        <begin position="1"/>
        <end position="49"/>
    </location>
</feature>
<feature type="transmembrane region" description="Helical" evidence="4">
    <location>
        <begin position="50"/>
        <end position="70"/>
    </location>
</feature>
<feature type="topological domain" description="Cytoplasmic" evidence="4">
    <location>
        <begin position="71"/>
        <end position="581"/>
    </location>
</feature>
<feature type="region of interest" description="Activation of NF-kappa-B" evidence="1">
    <location>
        <begin position="1"/>
        <end position="71"/>
    </location>
</feature>
<feature type="region of interest" description="Interaction with BCCIP" evidence="1">
    <location>
        <begin position="72"/>
        <end position="168"/>
    </location>
</feature>
<feature type="region of interest" description="Disordered" evidence="5">
    <location>
        <begin position="77"/>
        <end position="221"/>
    </location>
</feature>
<feature type="region of interest" description="Interaction with RELA" evidence="1">
    <location>
        <begin position="100"/>
        <end position="204"/>
    </location>
</feature>
<feature type="region of interest" description="Disordered" evidence="5">
    <location>
        <begin position="280"/>
        <end position="581"/>
    </location>
</feature>
<feature type="region of interest" description="Lung-homing for mammary tumors" evidence="1">
    <location>
        <begin position="380"/>
        <end position="442"/>
    </location>
</feature>
<feature type="compositionally biased region" description="Basic and acidic residues" evidence="5">
    <location>
        <begin position="108"/>
        <end position="126"/>
    </location>
</feature>
<feature type="compositionally biased region" description="Basic residues" evidence="5">
    <location>
        <begin position="159"/>
        <end position="168"/>
    </location>
</feature>
<feature type="compositionally biased region" description="Basic residues" evidence="5">
    <location>
        <begin position="197"/>
        <end position="207"/>
    </location>
</feature>
<feature type="compositionally biased region" description="Polar residues" evidence="5">
    <location>
        <begin position="318"/>
        <end position="331"/>
    </location>
</feature>
<feature type="compositionally biased region" description="Polar residues" evidence="5">
    <location>
        <begin position="353"/>
        <end position="371"/>
    </location>
</feature>
<feature type="compositionally biased region" description="Polar residues" evidence="5">
    <location>
        <begin position="382"/>
        <end position="393"/>
    </location>
</feature>
<feature type="compositionally biased region" description="Basic and acidic residues" evidence="5">
    <location>
        <begin position="421"/>
        <end position="433"/>
    </location>
</feature>
<feature type="compositionally biased region" description="Basic residues" evidence="5">
    <location>
        <begin position="440"/>
        <end position="450"/>
    </location>
</feature>
<feature type="compositionally biased region" description="Polar residues" evidence="5">
    <location>
        <begin position="519"/>
        <end position="535"/>
    </location>
</feature>
<feature type="compositionally biased region" description="Polar residues" evidence="5">
    <location>
        <begin position="548"/>
        <end position="567"/>
    </location>
</feature>
<feature type="compositionally biased region" description="Basic residues" evidence="5">
    <location>
        <begin position="570"/>
        <end position="581"/>
    </location>
</feature>
<feature type="modified residue" description="Phosphothreonine" evidence="3">
    <location>
        <position position="142"/>
    </location>
</feature>
<feature type="modified residue" description="Phosphoserine" evidence="3">
    <location>
        <position position="179"/>
    </location>
</feature>
<feature type="modified residue" description="Phosphoserine" evidence="3">
    <location>
        <position position="215"/>
    </location>
</feature>
<feature type="modified residue" description="Phosphoserine" evidence="3">
    <location>
        <position position="250"/>
    </location>
</feature>
<feature type="modified residue" description="N6-acetyllysine" evidence="2">
    <location>
        <position position="263"/>
    </location>
</feature>
<feature type="modified residue" description="Phosphoserine" evidence="8">
    <location>
        <position position="297"/>
    </location>
</feature>
<feature type="modified residue" description="Phosphoserine" evidence="3">
    <location>
        <position position="305"/>
    </location>
</feature>
<feature type="modified residue" description="Phosphoserine" evidence="3">
    <location>
        <position position="310"/>
    </location>
</feature>
<feature type="modified residue" description="Phosphoserine" evidence="3">
    <location>
        <position position="343"/>
    </location>
</feature>
<feature type="modified residue" description="Phosphoserine" evidence="3">
    <location>
        <position position="368"/>
    </location>
</feature>
<feature type="modified residue" description="Phosphoserine" evidence="3">
    <location>
        <position position="414"/>
    </location>
</feature>
<feature type="modified residue" description="Phosphoserine" evidence="8">
    <location>
        <position position="425"/>
    </location>
</feature>
<feature type="modified residue" description="Phosphoserine" evidence="8">
    <location>
        <position position="456"/>
    </location>
</feature>
<feature type="modified residue" description="Phosphoserine" evidence="3">
    <location>
        <position position="477"/>
    </location>
</feature>
<feature type="modified residue" description="Phosphoserine" evidence="3">
    <location>
        <position position="493"/>
    </location>
</feature>
<feature type="modified residue" description="Phosphoserine" evidence="3">
    <location>
        <position position="495"/>
    </location>
</feature>
<feature type="modified residue" description="Phosphoserine" evidence="8">
    <location>
        <position position="567"/>
    </location>
</feature>
<feature type="splice variant" id="VSP_012227" description="In isoform 2 and isoform 4." evidence="7">
    <location>
        <begin position="248"/>
        <end position="269"/>
    </location>
</feature>
<feature type="splice variant" id="VSP_012228" description="In isoform 3 and isoform 4." evidence="7">
    <location>
        <begin position="349"/>
        <end position="382"/>
    </location>
</feature>
<keyword id="KW-0007">Acetylation</keyword>
<keyword id="KW-0025">Alternative splicing</keyword>
<keyword id="KW-0965">Cell junction</keyword>
<keyword id="KW-0963">Cytoplasm</keyword>
<keyword id="KW-0256">Endoplasmic reticulum</keyword>
<keyword id="KW-0472">Membrane</keyword>
<keyword id="KW-0539">Nucleus</keyword>
<keyword id="KW-0597">Phosphoprotein</keyword>
<keyword id="KW-1185">Reference proteome</keyword>
<keyword id="KW-0796">Tight junction</keyword>
<keyword id="KW-0812">Transmembrane</keyword>
<keyword id="KW-1133">Transmembrane helix</keyword>
<proteinExistence type="evidence at protein level"/>
<gene>
    <name type="primary">Mtdh</name>
    <name type="synonym">Lyric</name>
</gene>
<organism>
    <name type="scientific">Rattus norvegicus</name>
    <name type="common">Rat</name>
    <dbReference type="NCBI Taxonomy" id="10116"/>
    <lineage>
        <taxon>Eukaryota</taxon>
        <taxon>Metazoa</taxon>
        <taxon>Chordata</taxon>
        <taxon>Craniata</taxon>
        <taxon>Vertebrata</taxon>
        <taxon>Euteleostomi</taxon>
        <taxon>Mammalia</taxon>
        <taxon>Eutheria</taxon>
        <taxon>Euarchontoglires</taxon>
        <taxon>Glires</taxon>
        <taxon>Rodentia</taxon>
        <taxon>Myomorpha</taxon>
        <taxon>Muroidea</taxon>
        <taxon>Muridae</taxon>
        <taxon>Murinae</taxon>
        <taxon>Rattus</taxon>
    </lineage>
</organism>
<dbReference type="EMBL" id="AF100421">
    <property type="protein sequence ID" value="AAC72405.2"/>
    <property type="molecule type" value="mRNA"/>
</dbReference>
<dbReference type="RefSeq" id="NP_596889.1">
    <molecule id="Q9Z1W6-1"/>
    <property type="nucleotide sequence ID" value="NM_133398.2"/>
</dbReference>
<dbReference type="FunCoup" id="Q9Z1W6">
    <property type="interactions" value="3185"/>
</dbReference>
<dbReference type="IntAct" id="Q9Z1W6">
    <property type="interactions" value="5"/>
</dbReference>
<dbReference type="STRING" id="10116.ENSRNOP00000009989"/>
<dbReference type="GlyGen" id="Q9Z1W6">
    <property type="glycosylation" value="1 site"/>
</dbReference>
<dbReference type="iPTMnet" id="Q9Z1W6"/>
<dbReference type="PhosphoSitePlus" id="Q9Z1W6"/>
<dbReference type="SwissPalm" id="Q9Z1W6"/>
<dbReference type="jPOST" id="Q9Z1W6"/>
<dbReference type="PaxDb" id="10116-ENSRNOP00000009989"/>
<dbReference type="PeptideAtlas" id="Q9Z1W6"/>
<dbReference type="GeneID" id="170910"/>
<dbReference type="KEGG" id="rno:170910"/>
<dbReference type="UCSC" id="RGD:620992">
    <molecule id="Q9Z1W6-1"/>
    <property type="organism name" value="rat"/>
</dbReference>
<dbReference type="AGR" id="RGD:620992"/>
<dbReference type="CTD" id="92140"/>
<dbReference type="RGD" id="620992">
    <property type="gene designation" value="Mtdh"/>
</dbReference>
<dbReference type="VEuPathDB" id="HostDB:ENSRNOG00000006870"/>
<dbReference type="eggNOG" id="ENOG502QU7P">
    <property type="taxonomic scope" value="Eukaryota"/>
</dbReference>
<dbReference type="HOGENOM" id="CLU_034908_0_0_1"/>
<dbReference type="InParanoid" id="Q9Z1W6"/>
<dbReference type="PhylomeDB" id="Q9Z1W6"/>
<dbReference type="TreeFam" id="TF331350"/>
<dbReference type="PRO" id="PR:Q9Z1W6"/>
<dbReference type="Proteomes" id="UP000002494">
    <property type="component" value="Chromosome 7"/>
</dbReference>
<dbReference type="Bgee" id="ENSRNOG00000006870">
    <property type="expression patterns" value="Expressed in quadriceps femoris and 19 other cell types or tissues"/>
</dbReference>
<dbReference type="GO" id="GO:0016324">
    <property type="term" value="C:apical plasma membrane"/>
    <property type="evidence" value="ECO:0000314"/>
    <property type="project" value="RGD"/>
</dbReference>
<dbReference type="GO" id="GO:0005923">
    <property type="term" value="C:bicellular tight junction"/>
    <property type="evidence" value="ECO:0000314"/>
    <property type="project" value="RGD"/>
</dbReference>
<dbReference type="GO" id="GO:0005737">
    <property type="term" value="C:cytoplasm"/>
    <property type="evidence" value="ECO:0000266"/>
    <property type="project" value="RGD"/>
</dbReference>
<dbReference type="GO" id="GO:0005783">
    <property type="term" value="C:endoplasmic reticulum"/>
    <property type="evidence" value="ECO:0000250"/>
    <property type="project" value="UniProtKB"/>
</dbReference>
<dbReference type="GO" id="GO:0005789">
    <property type="term" value="C:endoplasmic reticulum membrane"/>
    <property type="evidence" value="ECO:0000266"/>
    <property type="project" value="RGD"/>
</dbReference>
<dbReference type="GO" id="GO:0046581">
    <property type="term" value="C:intercellular canaliculus"/>
    <property type="evidence" value="ECO:0000314"/>
    <property type="project" value="RGD"/>
</dbReference>
<dbReference type="GO" id="GO:0016604">
    <property type="term" value="C:nuclear body"/>
    <property type="evidence" value="ECO:0000266"/>
    <property type="project" value="RGD"/>
</dbReference>
<dbReference type="GO" id="GO:0031965">
    <property type="term" value="C:nuclear membrane"/>
    <property type="evidence" value="ECO:0007669"/>
    <property type="project" value="UniProtKB-SubCell"/>
</dbReference>
<dbReference type="GO" id="GO:0005730">
    <property type="term" value="C:nucleolus"/>
    <property type="evidence" value="ECO:0000266"/>
    <property type="project" value="RGD"/>
</dbReference>
<dbReference type="GO" id="GO:0005634">
    <property type="term" value="C:nucleus"/>
    <property type="evidence" value="ECO:0000266"/>
    <property type="project" value="RGD"/>
</dbReference>
<dbReference type="GO" id="GO:0048471">
    <property type="term" value="C:perinuclear region of cytoplasm"/>
    <property type="evidence" value="ECO:0000314"/>
    <property type="project" value="RGD"/>
</dbReference>
<dbReference type="GO" id="GO:0003725">
    <property type="term" value="F:double-stranded RNA binding"/>
    <property type="evidence" value="ECO:0000266"/>
    <property type="project" value="RGD"/>
</dbReference>
<dbReference type="GO" id="GO:0051059">
    <property type="term" value="F:NF-kappaB binding"/>
    <property type="evidence" value="ECO:0000250"/>
    <property type="project" value="UniProtKB"/>
</dbReference>
<dbReference type="GO" id="GO:0061629">
    <property type="term" value="F:RNA polymerase II-specific DNA-binding transcription factor binding"/>
    <property type="evidence" value="ECO:0000266"/>
    <property type="project" value="RGD"/>
</dbReference>
<dbReference type="GO" id="GO:0003713">
    <property type="term" value="F:transcription coactivator activity"/>
    <property type="evidence" value="ECO:0000266"/>
    <property type="project" value="RGD"/>
</dbReference>
<dbReference type="GO" id="GO:0003712">
    <property type="term" value="F:transcription coregulator activity"/>
    <property type="evidence" value="ECO:0000318"/>
    <property type="project" value="GO_Central"/>
</dbReference>
<dbReference type="GO" id="GO:0070830">
    <property type="term" value="P:bicellular tight junction assembly"/>
    <property type="evidence" value="ECO:0000270"/>
    <property type="project" value="RGD"/>
</dbReference>
<dbReference type="GO" id="GO:0031663">
    <property type="term" value="P:lipopolysaccharide-mediated signaling pathway"/>
    <property type="evidence" value="ECO:0000266"/>
    <property type="project" value="RGD"/>
</dbReference>
<dbReference type="GO" id="GO:0043066">
    <property type="term" value="P:negative regulation of apoptotic process"/>
    <property type="evidence" value="ECO:0000266"/>
    <property type="project" value="RGD"/>
</dbReference>
<dbReference type="GO" id="GO:0000122">
    <property type="term" value="P:negative regulation of transcription by RNA polymerase II"/>
    <property type="evidence" value="ECO:0000250"/>
    <property type="project" value="UniProtKB"/>
</dbReference>
<dbReference type="GO" id="GO:0045766">
    <property type="term" value="P:positive regulation of angiogenesis"/>
    <property type="evidence" value="ECO:0000266"/>
    <property type="project" value="RGD"/>
</dbReference>
<dbReference type="GO" id="GO:0010508">
    <property type="term" value="P:positive regulation of autophagy"/>
    <property type="evidence" value="ECO:0000266"/>
    <property type="project" value="RGD"/>
</dbReference>
<dbReference type="GO" id="GO:0043123">
    <property type="term" value="P:positive regulation of canonical NF-kappaB signal transduction"/>
    <property type="evidence" value="ECO:0000266"/>
    <property type="project" value="RGD"/>
</dbReference>
<dbReference type="GO" id="GO:0051092">
    <property type="term" value="P:positive regulation of NF-kappaB transcription factor activity"/>
    <property type="evidence" value="ECO:0000250"/>
    <property type="project" value="UniProtKB"/>
</dbReference>
<dbReference type="GO" id="GO:0051897">
    <property type="term" value="P:positive regulation of phosphatidylinositol 3-kinase/protein kinase B signal transduction"/>
    <property type="evidence" value="ECO:0000266"/>
    <property type="project" value="RGD"/>
</dbReference>
<dbReference type="GO" id="GO:0006357">
    <property type="term" value="P:regulation of transcription by RNA polymerase II"/>
    <property type="evidence" value="ECO:0000318"/>
    <property type="project" value="GO_Central"/>
</dbReference>
<dbReference type="InterPro" id="IPR031402">
    <property type="entry name" value="LYRIC"/>
</dbReference>
<dbReference type="InterPro" id="IPR052305">
    <property type="entry name" value="TransReg_TumorExp"/>
</dbReference>
<dbReference type="PANTHER" id="PTHR23251">
    <property type="entry name" value="LYSINE-RICH CEACAM1 CO-ISOLATED PROTEIN LYRIC PROTEIN"/>
    <property type="match status" value="1"/>
</dbReference>
<dbReference type="PANTHER" id="PTHR23251:SF0">
    <property type="entry name" value="PROTEIN LYRIC"/>
    <property type="match status" value="1"/>
</dbReference>
<dbReference type="Pfam" id="PF15686">
    <property type="entry name" value="LYRIC"/>
    <property type="match status" value="1"/>
</dbReference>